<dbReference type="EC" id="1.2.1.10" evidence="1"/>
<dbReference type="EMBL" id="D86239">
    <property type="protein sequence ID" value="BAA13056.1"/>
    <property type="molecule type" value="Genomic_DNA"/>
</dbReference>
<dbReference type="EMBL" id="Y09555">
    <property type="protein sequence ID" value="CAA70751.1"/>
    <property type="molecule type" value="Genomic_DNA"/>
</dbReference>
<dbReference type="EMBL" id="U73857">
    <property type="protein sequence ID" value="AAB18075.1"/>
    <property type="molecule type" value="Genomic_DNA"/>
</dbReference>
<dbReference type="EMBL" id="U00096">
    <property type="protein sequence ID" value="AAC73454.1"/>
    <property type="molecule type" value="Genomic_DNA"/>
</dbReference>
<dbReference type="EMBL" id="AP009048">
    <property type="protein sequence ID" value="BAE76133.1"/>
    <property type="molecule type" value="Genomic_DNA"/>
</dbReference>
<dbReference type="PIR" id="G64762">
    <property type="entry name" value="G64762"/>
</dbReference>
<dbReference type="RefSeq" id="NP_414885.1">
    <property type="nucleotide sequence ID" value="NC_000913.3"/>
</dbReference>
<dbReference type="RefSeq" id="WP_000044314.1">
    <property type="nucleotide sequence ID" value="NZ_SSZK01000061.1"/>
</dbReference>
<dbReference type="SMR" id="P77580"/>
<dbReference type="BioGRID" id="4261622">
    <property type="interactions" value="20"/>
</dbReference>
<dbReference type="BioGRID" id="849402">
    <property type="interactions" value="10"/>
</dbReference>
<dbReference type="DIP" id="DIP-10210N"/>
<dbReference type="FunCoup" id="P77580">
    <property type="interactions" value="141"/>
</dbReference>
<dbReference type="IntAct" id="P77580">
    <property type="interactions" value="18"/>
</dbReference>
<dbReference type="STRING" id="511145.b0351"/>
<dbReference type="jPOST" id="P77580"/>
<dbReference type="PaxDb" id="511145-b0351"/>
<dbReference type="EnsemblBacteria" id="AAC73454">
    <property type="protein sequence ID" value="AAC73454"/>
    <property type="gene ID" value="b0351"/>
</dbReference>
<dbReference type="GeneID" id="93777104"/>
<dbReference type="GeneID" id="945008"/>
<dbReference type="KEGG" id="ecj:JW0342"/>
<dbReference type="KEGG" id="eco:b0351"/>
<dbReference type="KEGG" id="ecoc:C3026_24890"/>
<dbReference type="PATRIC" id="fig|1411691.4.peg.1927"/>
<dbReference type="EchoBASE" id="EB3390"/>
<dbReference type="eggNOG" id="COG4569">
    <property type="taxonomic scope" value="Bacteria"/>
</dbReference>
<dbReference type="HOGENOM" id="CLU_062208_0_0_6"/>
<dbReference type="InParanoid" id="P77580"/>
<dbReference type="OMA" id="QGNVNMV"/>
<dbReference type="OrthoDB" id="9786743at2"/>
<dbReference type="PhylomeDB" id="P77580"/>
<dbReference type="BioCyc" id="EcoCyc:MHPF-MONOMER"/>
<dbReference type="BioCyc" id="MetaCyc:MHPF-MONOMER"/>
<dbReference type="UniPathway" id="UPA00714"/>
<dbReference type="PRO" id="PR:P77580"/>
<dbReference type="Proteomes" id="UP000000625">
    <property type="component" value="Chromosome"/>
</dbReference>
<dbReference type="GO" id="GO:0008774">
    <property type="term" value="F:acetaldehyde dehydrogenase (acetylating) activity"/>
    <property type="evidence" value="ECO:0000314"/>
    <property type="project" value="EcoCyc"/>
</dbReference>
<dbReference type="GO" id="GO:0051287">
    <property type="term" value="F:NAD binding"/>
    <property type="evidence" value="ECO:0007669"/>
    <property type="project" value="UniProtKB-UniRule"/>
</dbReference>
<dbReference type="GO" id="GO:0019380">
    <property type="term" value="P:3-phenylpropionate catabolic process"/>
    <property type="evidence" value="ECO:0007669"/>
    <property type="project" value="UniProtKB-UniRule"/>
</dbReference>
<dbReference type="CDD" id="cd23933">
    <property type="entry name" value="ALDH_C"/>
    <property type="match status" value="1"/>
</dbReference>
<dbReference type="FunFam" id="3.30.360.10:FF:000021">
    <property type="entry name" value="Acetaldehyde dehydrogenase"/>
    <property type="match status" value="1"/>
</dbReference>
<dbReference type="Gene3D" id="3.30.360.10">
    <property type="entry name" value="Dihydrodipicolinate Reductase, domain 2"/>
    <property type="match status" value="1"/>
</dbReference>
<dbReference type="Gene3D" id="3.40.50.720">
    <property type="entry name" value="NAD(P)-binding Rossmann-like Domain"/>
    <property type="match status" value="1"/>
</dbReference>
<dbReference type="HAMAP" id="MF_01657">
    <property type="entry name" value="Ac_ald_DH_ac"/>
    <property type="match status" value="1"/>
</dbReference>
<dbReference type="InterPro" id="IPR003361">
    <property type="entry name" value="Acetaldehyde_dehydrogenase"/>
</dbReference>
<dbReference type="InterPro" id="IPR015426">
    <property type="entry name" value="Acetylaldehyde_DH_C"/>
</dbReference>
<dbReference type="InterPro" id="IPR036291">
    <property type="entry name" value="NAD(P)-bd_dom_sf"/>
</dbReference>
<dbReference type="InterPro" id="IPR000534">
    <property type="entry name" value="Semialdehyde_DH_NAD-bd"/>
</dbReference>
<dbReference type="NCBIfam" id="TIGR03215">
    <property type="entry name" value="ac_ald_DH_ac"/>
    <property type="match status" value="1"/>
</dbReference>
<dbReference type="NCBIfam" id="NF006157">
    <property type="entry name" value="PRK08300.1"/>
    <property type="match status" value="1"/>
</dbReference>
<dbReference type="Pfam" id="PF09290">
    <property type="entry name" value="AcetDehyd-dimer"/>
    <property type="match status" value="1"/>
</dbReference>
<dbReference type="Pfam" id="PF01118">
    <property type="entry name" value="Semialdhyde_dh"/>
    <property type="match status" value="1"/>
</dbReference>
<dbReference type="PIRSF" id="PIRSF015689">
    <property type="entry name" value="Actaldh_dh_actl"/>
    <property type="match status" value="1"/>
</dbReference>
<dbReference type="SMART" id="SM00859">
    <property type="entry name" value="Semialdhyde_dh"/>
    <property type="match status" value="1"/>
</dbReference>
<dbReference type="SUPFAM" id="SSF55347">
    <property type="entry name" value="Glyceraldehyde-3-phosphate dehydrogenase-like, C-terminal domain"/>
    <property type="match status" value="1"/>
</dbReference>
<dbReference type="SUPFAM" id="SSF51735">
    <property type="entry name" value="NAD(P)-binding Rossmann-fold domains"/>
    <property type="match status" value="1"/>
</dbReference>
<feature type="chain" id="PRO_0000096471" description="Acetaldehyde dehydrogenase">
    <location>
        <begin position="1"/>
        <end position="316"/>
    </location>
</feature>
<feature type="active site" description="Acyl-thioester intermediate" evidence="1">
    <location>
        <position position="131"/>
    </location>
</feature>
<feature type="binding site" evidence="1">
    <location>
        <begin position="11"/>
        <end position="14"/>
    </location>
    <ligand>
        <name>NAD(+)</name>
        <dbReference type="ChEBI" id="CHEBI:57540"/>
    </ligand>
</feature>
<feature type="binding site" evidence="1">
    <location>
        <begin position="162"/>
        <end position="170"/>
    </location>
    <ligand>
        <name>NAD(+)</name>
        <dbReference type="ChEBI" id="CHEBI:57540"/>
    </ligand>
</feature>
<feature type="binding site" evidence="1">
    <location>
        <position position="289"/>
    </location>
    <ligand>
        <name>NAD(+)</name>
        <dbReference type="ChEBI" id="CHEBI:57540"/>
    </ligand>
</feature>
<sequence>MSKRKVAIIGSGNIGTDLMIKILRHGQHLEMAVMVGIDPQSDGLARARRMGVATTHEGVIGLMNMPEFADIDIVFDATSAGAHVKNDAALREAKPDIRLIDLTPAAIGPYCVPVVNLEANVDQLNVNMVTCGGQATIPMVAAVSRVARVHYAEIIASIASKSAGPGTRANIDEFTETTSRAIEVVGGAAKGKAIIVLNPAEPPLMMRDTVYVLSDEASQDDIEASINEMAEAVQAYVPGYRLKQRVQFEVIPQDKPVNLPGVGQFSGLKTAVWLEVEGAAHYLPAYAGNLDIMTSSALATAEKMAQSLARKAGEAA</sequence>
<evidence type="ECO:0000255" key="1">
    <source>
        <dbReference type="HAMAP-Rule" id="MF_01657"/>
    </source>
</evidence>
<evidence type="ECO:0000269" key="2">
    <source>
    </source>
</evidence>
<evidence type="ECO:0000305" key="3"/>
<organism>
    <name type="scientific">Escherichia coli (strain K12)</name>
    <dbReference type="NCBI Taxonomy" id="83333"/>
    <lineage>
        <taxon>Bacteria</taxon>
        <taxon>Pseudomonadati</taxon>
        <taxon>Pseudomonadota</taxon>
        <taxon>Gammaproteobacteria</taxon>
        <taxon>Enterobacterales</taxon>
        <taxon>Enterobacteriaceae</taxon>
        <taxon>Escherichia</taxon>
    </lineage>
</organism>
<gene>
    <name evidence="1" type="primary">mhpF</name>
    <name type="synonym">mhpE</name>
    <name type="ordered locus">b0351</name>
    <name type="ordered locus">JW0342</name>
</gene>
<keyword id="KW-0058">Aromatic hydrocarbons catabolism</keyword>
<keyword id="KW-0520">NAD</keyword>
<keyword id="KW-0560">Oxidoreductase</keyword>
<keyword id="KW-1185">Reference proteome</keyword>
<name>ACDH_ECOLI</name>
<protein>
    <recommendedName>
        <fullName evidence="1">Acetaldehyde dehydrogenase</fullName>
        <ecNumber evidence="1">1.2.1.10</ecNumber>
    </recommendedName>
    <alternativeName>
        <fullName evidence="1">Acetaldehyde dehydrogenase [acetylating]</fullName>
    </alternativeName>
</protein>
<reference key="1">
    <citation type="submission" date="1996-06" db="EMBL/GenBank/DDBJ databases">
        <title>Complete sequence of the mhp operon.</title>
        <authorList>
            <person name="Kawamukai M."/>
        </authorList>
    </citation>
    <scope>NUCLEOTIDE SEQUENCE [GENOMIC DNA]</scope>
    <source>
        <strain>K12 / W3110 / ATCC 27325 / DSM 5911</strain>
    </source>
</reference>
<reference key="2">
    <citation type="journal article" date="1997" name="J. Bacteriol.">
        <title>Genetic characterization and expression in heterologous hosts of the 3-(3-hydroxyphenyl)propionate catabolic pathway of Escherichia coli K-12.</title>
        <authorList>
            <person name="Ferrandez A."/>
            <person name="Garcia J.L."/>
            <person name="Diaz E."/>
        </authorList>
    </citation>
    <scope>NUCLEOTIDE SEQUENCE [GENOMIC DNA]</scope>
    <source>
        <strain>K12 / CS520</strain>
    </source>
</reference>
<reference key="3">
    <citation type="submission" date="1997-01" db="EMBL/GenBank/DDBJ databases">
        <title>Sequence of minutes 4-25 of Escherichia coli.</title>
        <authorList>
            <person name="Chung E."/>
            <person name="Allen E."/>
            <person name="Araujo R."/>
            <person name="Aparicio A.M."/>
            <person name="Davis K."/>
            <person name="Duncan M."/>
            <person name="Federspiel N."/>
            <person name="Hyman R."/>
            <person name="Kalman S."/>
            <person name="Komp C."/>
            <person name="Kurdi O."/>
            <person name="Lew H."/>
            <person name="Lin D."/>
            <person name="Namath A."/>
            <person name="Oefner P."/>
            <person name="Roberts D."/>
            <person name="Schramm S."/>
            <person name="Davis R.W."/>
        </authorList>
    </citation>
    <scope>NUCLEOTIDE SEQUENCE [LARGE SCALE GENOMIC DNA]</scope>
    <source>
        <strain>K12 / MG1655 / ATCC 47076</strain>
    </source>
</reference>
<reference key="4">
    <citation type="journal article" date="1997" name="Science">
        <title>The complete genome sequence of Escherichia coli K-12.</title>
        <authorList>
            <person name="Blattner F.R."/>
            <person name="Plunkett G. III"/>
            <person name="Bloch C.A."/>
            <person name="Perna N.T."/>
            <person name="Burland V."/>
            <person name="Riley M."/>
            <person name="Collado-Vides J."/>
            <person name="Glasner J.D."/>
            <person name="Rode C.K."/>
            <person name="Mayhew G.F."/>
            <person name="Gregor J."/>
            <person name="Davis N.W."/>
            <person name="Kirkpatrick H.A."/>
            <person name="Goeden M.A."/>
            <person name="Rose D.J."/>
            <person name="Mau B."/>
            <person name="Shao Y."/>
        </authorList>
    </citation>
    <scope>NUCLEOTIDE SEQUENCE [LARGE SCALE GENOMIC DNA]</scope>
    <source>
        <strain>K12 / MG1655 / ATCC 47076</strain>
    </source>
</reference>
<reference key="5">
    <citation type="journal article" date="2006" name="Mol. Syst. Biol.">
        <title>Highly accurate genome sequences of Escherichia coli K-12 strains MG1655 and W3110.</title>
        <authorList>
            <person name="Hayashi K."/>
            <person name="Morooka N."/>
            <person name="Yamamoto Y."/>
            <person name="Fujita K."/>
            <person name="Isono K."/>
            <person name="Choi S."/>
            <person name="Ohtsubo E."/>
            <person name="Baba T."/>
            <person name="Wanner B.L."/>
            <person name="Mori H."/>
            <person name="Horiuchi T."/>
        </authorList>
    </citation>
    <scope>NUCLEOTIDE SEQUENCE [LARGE SCALE GENOMIC DNA]</scope>
    <source>
        <strain>K12 / W3110 / ATCC 27325 / DSM 5911</strain>
    </source>
</reference>
<reference key="6">
    <citation type="journal article" date="2006" name="Biochem. Biophys. Res. Commun.">
        <title>Coupled expression of MhpE aldolase and MhpF dehydrogenase in Escherichia coli.</title>
        <authorList>
            <person name="Lee S.J."/>
            <person name="Ko J.H."/>
            <person name="Kang H.Y."/>
            <person name="Lee Y."/>
        </authorList>
    </citation>
    <scope>INTERACTION WITH MHPF</scope>
    <scope>FUNCTION</scope>
</reference>
<accession>P77580</accession>
<accession>Q2MC73</accession>
<comment type="function">
    <text evidence="2">Catalyzes the conversion of acetaldehyde to acetyl-CoA, using NAD(+) and coenzyme A. Is the final enzyme in the meta-cleavage pathway for the degradation of 3-phenylpropanoate. Functions as a chaperone protein for folding of MhpE.</text>
</comment>
<comment type="catalytic activity">
    <reaction evidence="1">
        <text>acetaldehyde + NAD(+) + CoA = acetyl-CoA + NADH + H(+)</text>
        <dbReference type="Rhea" id="RHEA:23288"/>
        <dbReference type="ChEBI" id="CHEBI:15343"/>
        <dbReference type="ChEBI" id="CHEBI:15378"/>
        <dbReference type="ChEBI" id="CHEBI:57287"/>
        <dbReference type="ChEBI" id="CHEBI:57288"/>
        <dbReference type="ChEBI" id="CHEBI:57540"/>
        <dbReference type="ChEBI" id="CHEBI:57945"/>
        <dbReference type="EC" id="1.2.1.10"/>
    </reaction>
</comment>
<comment type="pathway">
    <text evidence="1">Aromatic compound metabolism; 3-phenylpropanoate degradation.</text>
</comment>
<comment type="subunit">
    <text evidence="1 2">Interacts with MhpE.</text>
</comment>
<comment type="similarity">
    <text evidence="1 3">Belongs to the acetaldehyde dehydrogenase family.</text>
</comment>
<proteinExistence type="evidence at protein level"/>